<accession>P0A842</accession>
<accession>P36664</accession>
<evidence type="ECO:0000255" key="1">
    <source>
        <dbReference type="HAMAP-Rule" id="MF_00060"/>
    </source>
</evidence>
<protein>
    <recommendedName>
        <fullName evidence="1">5'/3'-nucleotidase SurE</fullName>
        <ecNumber evidence="1">3.1.3.5</ecNumber>
        <ecNumber evidence="1">3.1.3.6</ecNumber>
    </recommendedName>
    <alternativeName>
        <fullName evidence="1">Exopolyphosphatase</fullName>
        <ecNumber evidence="1">3.6.1.11</ecNumber>
    </alternativeName>
    <alternativeName>
        <fullName evidence="1">Nucleoside monophosphate phosphohydrolase</fullName>
    </alternativeName>
</protein>
<proteinExistence type="inferred from homology"/>
<comment type="function">
    <text evidence="1">Nucleotidase with a broad substrate specificity as it can dephosphorylate various ribo- and deoxyribonucleoside 5'-monophosphates and ribonucleoside 3'-monophosphates with highest affinity to 3'-AMP. Also hydrolyzes polyphosphate (exopolyphosphatase activity) with the preference for short-chain-length substrates (P20-25). Might be involved in the regulation of dNTP and NTP pools, and in the turnover of 3'-mononucleotides produced by numerous intracellular RNases (T1, T2, and F) during the degradation of various RNAs.</text>
</comment>
<comment type="catalytic activity">
    <reaction evidence="1">
        <text>a ribonucleoside 5'-phosphate + H2O = a ribonucleoside + phosphate</text>
        <dbReference type="Rhea" id="RHEA:12484"/>
        <dbReference type="ChEBI" id="CHEBI:15377"/>
        <dbReference type="ChEBI" id="CHEBI:18254"/>
        <dbReference type="ChEBI" id="CHEBI:43474"/>
        <dbReference type="ChEBI" id="CHEBI:58043"/>
        <dbReference type="EC" id="3.1.3.5"/>
    </reaction>
</comment>
<comment type="catalytic activity">
    <reaction evidence="1">
        <text>a ribonucleoside 3'-phosphate + H2O = a ribonucleoside + phosphate</text>
        <dbReference type="Rhea" id="RHEA:10144"/>
        <dbReference type="ChEBI" id="CHEBI:13197"/>
        <dbReference type="ChEBI" id="CHEBI:15377"/>
        <dbReference type="ChEBI" id="CHEBI:18254"/>
        <dbReference type="ChEBI" id="CHEBI:43474"/>
        <dbReference type="EC" id="3.1.3.6"/>
    </reaction>
</comment>
<comment type="catalytic activity">
    <reaction evidence="1">
        <text>[phosphate](n) + H2O = [phosphate](n-1) + phosphate + H(+)</text>
        <dbReference type="Rhea" id="RHEA:21528"/>
        <dbReference type="Rhea" id="RHEA-COMP:9859"/>
        <dbReference type="Rhea" id="RHEA-COMP:14279"/>
        <dbReference type="ChEBI" id="CHEBI:15377"/>
        <dbReference type="ChEBI" id="CHEBI:15378"/>
        <dbReference type="ChEBI" id="CHEBI:16838"/>
        <dbReference type="ChEBI" id="CHEBI:43474"/>
        <dbReference type="EC" id="3.6.1.11"/>
    </reaction>
</comment>
<comment type="cofactor">
    <cofactor evidence="1">
        <name>a divalent metal cation</name>
        <dbReference type="ChEBI" id="CHEBI:60240"/>
    </cofactor>
    <text evidence="1">Binds 1 divalent metal cation per subunit.</text>
</comment>
<comment type="subcellular location">
    <subcellularLocation>
        <location evidence="1">Cytoplasm</location>
    </subcellularLocation>
</comment>
<comment type="similarity">
    <text evidence="1">Belongs to the SurE nucleotidase family.</text>
</comment>
<dbReference type="EC" id="3.1.3.5" evidence="1"/>
<dbReference type="EC" id="3.1.3.6" evidence="1"/>
<dbReference type="EC" id="3.6.1.11" evidence="1"/>
<dbReference type="EMBL" id="AE005174">
    <property type="protein sequence ID" value="AAG57851.1"/>
    <property type="molecule type" value="Genomic_DNA"/>
</dbReference>
<dbReference type="EMBL" id="BA000007">
    <property type="protein sequence ID" value="BAB37021.1"/>
    <property type="molecule type" value="Genomic_DNA"/>
</dbReference>
<dbReference type="PIR" id="F91078">
    <property type="entry name" value="F91078"/>
</dbReference>
<dbReference type="PIR" id="G85923">
    <property type="entry name" value="G85923"/>
</dbReference>
<dbReference type="RefSeq" id="WP_001295182.1">
    <property type="nucleotide sequence ID" value="NZ_VOAI01000003.1"/>
</dbReference>
<dbReference type="SMR" id="P0A842"/>
<dbReference type="STRING" id="155864.Z4052"/>
<dbReference type="GeneID" id="93779262"/>
<dbReference type="KEGG" id="ece:Z4052"/>
<dbReference type="KEGG" id="ecs:ECs_3598"/>
<dbReference type="PATRIC" id="fig|386585.9.peg.3761"/>
<dbReference type="eggNOG" id="COG0496">
    <property type="taxonomic scope" value="Bacteria"/>
</dbReference>
<dbReference type="HOGENOM" id="CLU_045192_1_2_6"/>
<dbReference type="OMA" id="DCVHIAL"/>
<dbReference type="Proteomes" id="UP000000558">
    <property type="component" value="Chromosome"/>
</dbReference>
<dbReference type="Proteomes" id="UP000002519">
    <property type="component" value="Chromosome"/>
</dbReference>
<dbReference type="GO" id="GO:0005737">
    <property type="term" value="C:cytoplasm"/>
    <property type="evidence" value="ECO:0007669"/>
    <property type="project" value="UniProtKB-SubCell"/>
</dbReference>
<dbReference type="GO" id="GO:0008254">
    <property type="term" value="F:3'-nucleotidase activity"/>
    <property type="evidence" value="ECO:0007669"/>
    <property type="project" value="UniProtKB-UniRule"/>
</dbReference>
<dbReference type="GO" id="GO:0008253">
    <property type="term" value="F:5'-nucleotidase activity"/>
    <property type="evidence" value="ECO:0007669"/>
    <property type="project" value="UniProtKB-UniRule"/>
</dbReference>
<dbReference type="GO" id="GO:0004309">
    <property type="term" value="F:exopolyphosphatase activity"/>
    <property type="evidence" value="ECO:0007669"/>
    <property type="project" value="UniProtKB-UniRule"/>
</dbReference>
<dbReference type="GO" id="GO:0046872">
    <property type="term" value="F:metal ion binding"/>
    <property type="evidence" value="ECO:0007669"/>
    <property type="project" value="UniProtKB-UniRule"/>
</dbReference>
<dbReference type="GO" id="GO:0000166">
    <property type="term" value="F:nucleotide binding"/>
    <property type="evidence" value="ECO:0007669"/>
    <property type="project" value="UniProtKB-KW"/>
</dbReference>
<dbReference type="FunFam" id="3.40.1210.10:FF:000001">
    <property type="entry name" value="5'/3'-nucleotidase SurE"/>
    <property type="match status" value="1"/>
</dbReference>
<dbReference type="Gene3D" id="3.40.1210.10">
    <property type="entry name" value="Survival protein SurE-like phosphatase/nucleotidase"/>
    <property type="match status" value="1"/>
</dbReference>
<dbReference type="HAMAP" id="MF_00060">
    <property type="entry name" value="SurE"/>
    <property type="match status" value="1"/>
</dbReference>
<dbReference type="InterPro" id="IPR030048">
    <property type="entry name" value="SurE"/>
</dbReference>
<dbReference type="InterPro" id="IPR002828">
    <property type="entry name" value="SurE-like_Pase/nucleotidase"/>
</dbReference>
<dbReference type="InterPro" id="IPR036523">
    <property type="entry name" value="SurE-like_sf"/>
</dbReference>
<dbReference type="NCBIfam" id="NF001488">
    <property type="entry name" value="PRK00346.1-1"/>
    <property type="match status" value="1"/>
</dbReference>
<dbReference type="NCBIfam" id="NF001489">
    <property type="entry name" value="PRK00346.1-3"/>
    <property type="match status" value="1"/>
</dbReference>
<dbReference type="NCBIfam" id="NF001490">
    <property type="entry name" value="PRK00346.1-4"/>
    <property type="match status" value="1"/>
</dbReference>
<dbReference type="NCBIfam" id="TIGR00087">
    <property type="entry name" value="surE"/>
    <property type="match status" value="1"/>
</dbReference>
<dbReference type="PANTHER" id="PTHR30457">
    <property type="entry name" value="5'-NUCLEOTIDASE SURE"/>
    <property type="match status" value="1"/>
</dbReference>
<dbReference type="PANTHER" id="PTHR30457:SF12">
    <property type="entry name" value="5'_3'-NUCLEOTIDASE SURE"/>
    <property type="match status" value="1"/>
</dbReference>
<dbReference type="Pfam" id="PF01975">
    <property type="entry name" value="SurE"/>
    <property type="match status" value="1"/>
</dbReference>
<dbReference type="SUPFAM" id="SSF64167">
    <property type="entry name" value="SurE-like"/>
    <property type="match status" value="1"/>
</dbReference>
<reference key="1">
    <citation type="journal article" date="2001" name="Nature">
        <title>Genome sequence of enterohaemorrhagic Escherichia coli O157:H7.</title>
        <authorList>
            <person name="Perna N.T."/>
            <person name="Plunkett G. III"/>
            <person name="Burland V."/>
            <person name="Mau B."/>
            <person name="Glasner J.D."/>
            <person name="Rose D.J."/>
            <person name="Mayhew G.F."/>
            <person name="Evans P.S."/>
            <person name="Gregor J."/>
            <person name="Kirkpatrick H.A."/>
            <person name="Posfai G."/>
            <person name="Hackett J."/>
            <person name="Klink S."/>
            <person name="Boutin A."/>
            <person name="Shao Y."/>
            <person name="Miller L."/>
            <person name="Grotbeck E.J."/>
            <person name="Davis N.W."/>
            <person name="Lim A."/>
            <person name="Dimalanta E.T."/>
            <person name="Potamousis K."/>
            <person name="Apodaca J."/>
            <person name="Anantharaman T.S."/>
            <person name="Lin J."/>
            <person name="Yen G."/>
            <person name="Schwartz D.C."/>
            <person name="Welch R.A."/>
            <person name="Blattner F.R."/>
        </authorList>
    </citation>
    <scope>NUCLEOTIDE SEQUENCE [LARGE SCALE GENOMIC DNA]</scope>
    <source>
        <strain>O157:H7 / EDL933 / ATCC 700927 / EHEC</strain>
    </source>
</reference>
<reference key="2">
    <citation type="journal article" date="2001" name="DNA Res.">
        <title>Complete genome sequence of enterohemorrhagic Escherichia coli O157:H7 and genomic comparison with a laboratory strain K-12.</title>
        <authorList>
            <person name="Hayashi T."/>
            <person name="Makino K."/>
            <person name="Ohnishi M."/>
            <person name="Kurokawa K."/>
            <person name="Ishii K."/>
            <person name="Yokoyama K."/>
            <person name="Han C.-G."/>
            <person name="Ohtsubo E."/>
            <person name="Nakayama K."/>
            <person name="Murata T."/>
            <person name="Tanaka M."/>
            <person name="Tobe T."/>
            <person name="Iida T."/>
            <person name="Takami H."/>
            <person name="Honda T."/>
            <person name="Sasakawa C."/>
            <person name="Ogasawara N."/>
            <person name="Yasunaga T."/>
            <person name="Kuhara S."/>
            <person name="Shiba T."/>
            <person name="Hattori M."/>
            <person name="Shinagawa H."/>
        </authorList>
    </citation>
    <scope>NUCLEOTIDE SEQUENCE [LARGE SCALE GENOMIC DNA]</scope>
    <source>
        <strain>O157:H7 / Sakai / RIMD 0509952 / EHEC</strain>
    </source>
</reference>
<organism>
    <name type="scientific">Escherichia coli O157:H7</name>
    <dbReference type="NCBI Taxonomy" id="83334"/>
    <lineage>
        <taxon>Bacteria</taxon>
        <taxon>Pseudomonadati</taxon>
        <taxon>Pseudomonadota</taxon>
        <taxon>Gammaproteobacteria</taxon>
        <taxon>Enterobacterales</taxon>
        <taxon>Enterobacteriaceae</taxon>
        <taxon>Escherichia</taxon>
    </lineage>
</organism>
<feature type="chain" id="PRO_0000111810" description="5'/3'-nucleotidase SurE">
    <location>
        <begin position="1"/>
        <end position="253"/>
    </location>
</feature>
<feature type="binding site" evidence="1">
    <location>
        <position position="8"/>
    </location>
    <ligand>
        <name>a divalent metal cation</name>
        <dbReference type="ChEBI" id="CHEBI:60240"/>
    </ligand>
</feature>
<feature type="binding site" evidence="1">
    <location>
        <position position="9"/>
    </location>
    <ligand>
        <name>a divalent metal cation</name>
        <dbReference type="ChEBI" id="CHEBI:60240"/>
    </ligand>
</feature>
<feature type="binding site" evidence="1">
    <location>
        <position position="39"/>
    </location>
    <ligand>
        <name>a divalent metal cation</name>
        <dbReference type="ChEBI" id="CHEBI:60240"/>
    </ligand>
</feature>
<feature type="binding site" evidence="1">
    <location>
        <position position="92"/>
    </location>
    <ligand>
        <name>a divalent metal cation</name>
        <dbReference type="ChEBI" id="CHEBI:60240"/>
    </ligand>
</feature>
<gene>
    <name evidence="1" type="primary">surE</name>
    <name type="ordered locus">Z4052</name>
    <name type="ordered locus">ECs3598</name>
</gene>
<sequence>MRILLSNDDGVHAPGIQTLAKALREFADVQVVAPDRNRSGASNSLTLESSLRTFTFENGDIAVQMGTPTDCVYLGVNALMRPRPDIVVSGINAGPNLGDDVIYSGTVAAAMEGRHLGFPALAVSLDGHKHYDTAAAVTCSILRALCKEPLRTGRILNINVPDLPLDQIKGIRVTRCGTRHPADQVIPQQDPRGNTLYWIGPPGGKCDAGPGTDFAAVDEGYVSITPLHVDLTAHSAQDVVSDWLNSVGVGTQW</sequence>
<name>SURE_ECO57</name>
<keyword id="KW-0963">Cytoplasm</keyword>
<keyword id="KW-0378">Hydrolase</keyword>
<keyword id="KW-0479">Metal-binding</keyword>
<keyword id="KW-0547">Nucleotide-binding</keyword>
<keyword id="KW-1185">Reference proteome</keyword>